<gene>
    <name evidence="1" type="primary">ruvA</name>
    <name type="ordered locus">A1S_2587</name>
</gene>
<dbReference type="EMBL" id="CP000521">
    <property type="protein sequence ID" value="ABO13004.2"/>
    <property type="molecule type" value="Genomic_DNA"/>
</dbReference>
<dbReference type="RefSeq" id="WP_000578663.1">
    <property type="nucleotide sequence ID" value="NZ_CP053098.1"/>
</dbReference>
<dbReference type="SMR" id="A3M7W0"/>
<dbReference type="GeneID" id="92894860"/>
<dbReference type="KEGG" id="acb:A1S_2587"/>
<dbReference type="HOGENOM" id="CLU_087936_0_0_6"/>
<dbReference type="GO" id="GO:0005737">
    <property type="term" value="C:cytoplasm"/>
    <property type="evidence" value="ECO:0007669"/>
    <property type="project" value="UniProtKB-SubCell"/>
</dbReference>
<dbReference type="GO" id="GO:0009379">
    <property type="term" value="C:Holliday junction helicase complex"/>
    <property type="evidence" value="ECO:0007669"/>
    <property type="project" value="InterPro"/>
</dbReference>
<dbReference type="GO" id="GO:0048476">
    <property type="term" value="C:Holliday junction resolvase complex"/>
    <property type="evidence" value="ECO:0007669"/>
    <property type="project" value="UniProtKB-UniRule"/>
</dbReference>
<dbReference type="GO" id="GO:0005524">
    <property type="term" value="F:ATP binding"/>
    <property type="evidence" value="ECO:0007669"/>
    <property type="project" value="InterPro"/>
</dbReference>
<dbReference type="GO" id="GO:0000400">
    <property type="term" value="F:four-way junction DNA binding"/>
    <property type="evidence" value="ECO:0007669"/>
    <property type="project" value="UniProtKB-UniRule"/>
</dbReference>
<dbReference type="GO" id="GO:0009378">
    <property type="term" value="F:four-way junction helicase activity"/>
    <property type="evidence" value="ECO:0007669"/>
    <property type="project" value="InterPro"/>
</dbReference>
<dbReference type="GO" id="GO:0006310">
    <property type="term" value="P:DNA recombination"/>
    <property type="evidence" value="ECO:0007669"/>
    <property type="project" value="UniProtKB-UniRule"/>
</dbReference>
<dbReference type="GO" id="GO:0006281">
    <property type="term" value="P:DNA repair"/>
    <property type="evidence" value="ECO:0007669"/>
    <property type="project" value="UniProtKB-UniRule"/>
</dbReference>
<dbReference type="Gene3D" id="1.10.150.20">
    <property type="entry name" value="5' to 3' exonuclease, C-terminal subdomain"/>
    <property type="match status" value="1"/>
</dbReference>
<dbReference type="Gene3D" id="1.10.8.10">
    <property type="entry name" value="DNA helicase RuvA subunit, C-terminal domain"/>
    <property type="match status" value="1"/>
</dbReference>
<dbReference type="Gene3D" id="2.40.50.140">
    <property type="entry name" value="Nucleic acid-binding proteins"/>
    <property type="match status" value="1"/>
</dbReference>
<dbReference type="HAMAP" id="MF_00031">
    <property type="entry name" value="DNA_HJ_migration_RuvA"/>
    <property type="match status" value="1"/>
</dbReference>
<dbReference type="InterPro" id="IPR013849">
    <property type="entry name" value="DNA_helicase_Holl-junc_RuvA_I"/>
</dbReference>
<dbReference type="InterPro" id="IPR003583">
    <property type="entry name" value="Hlx-hairpin-Hlx_DNA-bd_motif"/>
</dbReference>
<dbReference type="InterPro" id="IPR012340">
    <property type="entry name" value="NA-bd_OB-fold"/>
</dbReference>
<dbReference type="InterPro" id="IPR000085">
    <property type="entry name" value="RuvA"/>
</dbReference>
<dbReference type="InterPro" id="IPR010994">
    <property type="entry name" value="RuvA_2-like"/>
</dbReference>
<dbReference type="InterPro" id="IPR011114">
    <property type="entry name" value="RuvA_C"/>
</dbReference>
<dbReference type="InterPro" id="IPR036267">
    <property type="entry name" value="RuvA_C_sf"/>
</dbReference>
<dbReference type="NCBIfam" id="TIGR00084">
    <property type="entry name" value="ruvA"/>
    <property type="match status" value="1"/>
</dbReference>
<dbReference type="Pfam" id="PF14520">
    <property type="entry name" value="HHH_5"/>
    <property type="match status" value="1"/>
</dbReference>
<dbReference type="Pfam" id="PF07499">
    <property type="entry name" value="RuvA_C"/>
    <property type="match status" value="1"/>
</dbReference>
<dbReference type="Pfam" id="PF01330">
    <property type="entry name" value="RuvA_N"/>
    <property type="match status" value="1"/>
</dbReference>
<dbReference type="SMART" id="SM00278">
    <property type="entry name" value="HhH1"/>
    <property type="match status" value="2"/>
</dbReference>
<dbReference type="SUPFAM" id="SSF46929">
    <property type="entry name" value="DNA helicase RuvA subunit, C-terminal domain"/>
    <property type="match status" value="1"/>
</dbReference>
<dbReference type="SUPFAM" id="SSF50249">
    <property type="entry name" value="Nucleic acid-binding proteins"/>
    <property type="match status" value="1"/>
</dbReference>
<dbReference type="SUPFAM" id="SSF47781">
    <property type="entry name" value="RuvA domain 2-like"/>
    <property type="match status" value="1"/>
</dbReference>
<keyword id="KW-0963">Cytoplasm</keyword>
<keyword id="KW-0227">DNA damage</keyword>
<keyword id="KW-0233">DNA recombination</keyword>
<keyword id="KW-0234">DNA repair</keyword>
<keyword id="KW-0238">DNA-binding</keyword>
<reference key="1">
    <citation type="journal article" date="2007" name="Genes Dev.">
        <title>New insights into Acinetobacter baumannii pathogenesis revealed by high-density pyrosequencing and transposon mutagenesis.</title>
        <authorList>
            <person name="Smith M.G."/>
            <person name="Gianoulis T.A."/>
            <person name="Pukatzki S."/>
            <person name="Mekalanos J.J."/>
            <person name="Ornston L.N."/>
            <person name="Gerstein M."/>
            <person name="Snyder M."/>
        </authorList>
    </citation>
    <scope>NUCLEOTIDE SEQUENCE [LARGE SCALE GENOMIC DNA]</scope>
    <source>
        <strain>ATCC 17978 / DSM 105126 / CIP 53.77 / LMG 1025 / NCDC KC755 / 5377</strain>
    </source>
</reference>
<feature type="chain" id="PRO_1000090272" description="Holliday junction branch migration complex subunit RuvA">
    <location>
        <begin position="1"/>
        <end position="199"/>
    </location>
</feature>
<feature type="region of interest" description="Domain I" evidence="1">
    <location>
        <begin position="1"/>
        <end position="63"/>
    </location>
</feature>
<feature type="region of interest" description="Domain II" evidence="1">
    <location>
        <begin position="64"/>
        <end position="142"/>
    </location>
</feature>
<feature type="region of interest" description="Flexible linker" evidence="1">
    <location>
        <begin position="143"/>
        <end position="150"/>
    </location>
</feature>
<feature type="region of interest" description="Domain III" evidence="1">
    <location>
        <begin position="150"/>
        <end position="199"/>
    </location>
</feature>
<proteinExistence type="inferred from homology"/>
<name>RUVA_ACIBT</name>
<evidence type="ECO:0000255" key="1">
    <source>
        <dbReference type="HAMAP-Rule" id="MF_00031"/>
    </source>
</evidence>
<sequence length="199" mass="21527">MIGCLIGEVFALEAPTVLLNVNGVGYEIDTPLSTFCQLQKGQKVTLWTHLVVREDAQQLYGFSDAQEKTIFRTLLKVNGVGPKMALGILSTLSVELLVHTIEHDDVNTLVKVPGVGKKTAERLMIELRDRFKTLAQGTSSAAALPQIQFVSNSPVAEAEAALQSLGYKPLEAQKAVAAVKADYTESADIIRAALKSMMK</sequence>
<comment type="function">
    <text evidence="1">The RuvA-RuvB-RuvC complex processes Holliday junction (HJ) DNA during genetic recombination and DNA repair, while the RuvA-RuvB complex plays an important role in the rescue of blocked DNA replication forks via replication fork reversal (RFR). RuvA specifically binds to HJ cruciform DNA, conferring on it an open structure. The RuvB hexamer acts as an ATP-dependent pump, pulling dsDNA into and through the RuvAB complex. HJ branch migration allows RuvC to scan DNA until it finds its consensus sequence, where it cleaves and resolves the cruciform DNA.</text>
</comment>
<comment type="subunit">
    <text evidence="1">Homotetramer. Forms an RuvA(8)-RuvB(12)-Holliday junction (HJ) complex. HJ DNA is sandwiched between 2 RuvA tetramers; dsDNA enters through RuvA and exits via RuvB. An RuvB hexamer assembles on each DNA strand where it exits the tetramer. Each RuvB hexamer is contacted by two RuvA subunits (via domain III) on 2 adjacent RuvB subunits; this complex drives branch migration. In the full resolvosome a probable DNA-RuvA(4)-RuvB(12)-RuvC(2) complex forms which resolves the HJ.</text>
</comment>
<comment type="subcellular location">
    <subcellularLocation>
        <location evidence="1">Cytoplasm</location>
    </subcellularLocation>
</comment>
<comment type="domain">
    <text evidence="1">Has three domains with a flexible linker between the domains II and III and assumes an 'L' shape. Domain III is highly mobile and contacts RuvB.</text>
</comment>
<comment type="similarity">
    <text evidence="1">Belongs to the RuvA family.</text>
</comment>
<organism>
    <name type="scientific">Acinetobacter baumannii (strain ATCC 17978 / DSM 105126 / CIP 53.77 / LMG 1025 / NCDC KC755 / 5377)</name>
    <dbReference type="NCBI Taxonomy" id="400667"/>
    <lineage>
        <taxon>Bacteria</taxon>
        <taxon>Pseudomonadati</taxon>
        <taxon>Pseudomonadota</taxon>
        <taxon>Gammaproteobacteria</taxon>
        <taxon>Moraxellales</taxon>
        <taxon>Moraxellaceae</taxon>
        <taxon>Acinetobacter</taxon>
        <taxon>Acinetobacter calcoaceticus/baumannii complex</taxon>
    </lineage>
</organism>
<accession>A3M7W0</accession>
<protein>
    <recommendedName>
        <fullName evidence="1">Holliday junction branch migration complex subunit RuvA</fullName>
    </recommendedName>
</protein>